<proteinExistence type="evidence at transcript level"/>
<accession>P49359</accession>
<dbReference type="EMBL" id="Z25856">
    <property type="protein sequence ID" value="CAA81075.1"/>
    <property type="molecule type" value="mRNA"/>
</dbReference>
<dbReference type="PIR" id="S60194">
    <property type="entry name" value="S60194"/>
</dbReference>
<dbReference type="SMR" id="P49359"/>
<dbReference type="GO" id="GO:0005960">
    <property type="term" value="C:glycine cleavage complex"/>
    <property type="evidence" value="ECO:0007669"/>
    <property type="project" value="InterPro"/>
</dbReference>
<dbReference type="GO" id="GO:0005739">
    <property type="term" value="C:mitochondrion"/>
    <property type="evidence" value="ECO:0007669"/>
    <property type="project" value="UniProtKB-SubCell"/>
</dbReference>
<dbReference type="GO" id="GO:0019464">
    <property type="term" value="P:glycine decarboxylation via glycine cleavage system"/>
    <property type="evidence" value="ECO:0007669"/>
    <property type="project" value="InterPro"/>
</dbReference>
<dbReference type="CDD" id="cd06848">
    <property type="entry name" value="GCS_H"/>
    <property type="match status" value="1"/>
</dbReference>
<dbReference type="FunFam" id="2.40.50.100:FF:000011">
    <property type="entry name" value="Glycine cleavage system H protein"/>
    <property type="match status" value="1"/>
</dbReference>
<dbReference type="Gene3D" id="2.40.50.100">
    <property type="match status" value="1"/>
</dbReference>
<dbReference type="HAMAP" id="MF_00272">
    <property type="entry name" value="GcvH"/>
    <property type="match status" value="1"/>
</dbReference>
<dbReference type="InterPro" id="IPR003016">
    <property type="entry name" value="2-oxoA_DH_lipoyl-BS"/>
</dbReference>
<dbReference type="InterPro" id="IPR000089">
    <property type="entry name" value="Biotin_lipoyl"/>
</dbReference>
<dbReference type="InterPro" id="IPR002930">
    <property type="entry name" value="GCV_H"/>
</dbReference>
<dbReference type="InterPro" id="IPR033753">
    <property type="entry name" value="GCV_H/Fam206"/>
</dbReference>
<dbReference type="InterPro" id="IPR017453">
    <property type="entry name" value="GCV_H_sub"/>
</dbReference>
<dbReference type="InterPro" id="IPR011053">
    <property type="entry name" value="Single_hybrid_motif"/>
</dbReference>
<dbReference type="NCBIfam" id="TIGR00527">
    <property type="entry name" value="gcvH"/>
    <property type="match status" value="1"/>
</dbReference>
<dbReference type="NCBIfam" id="NF002270">
    <property type="entry name" value="PRK01202.1"/>
    <property type="match status" value="1"/>
</dbReference>
<dbReference type="PANTHER" id="PTHR11715">
    <property type="entry name" value="GLYCINE CLEAVAGE SYSTEM H PROTEIN"/>
    <property type="match status" value="1"/>
</dbReference>
<dbReference type="PANTHER" id="PTHR11715:SF27">
    <property type="entry name" value="GLYCINE CLEAVAGE SYSTEM H PROTEIN 1, MITOCHONDRIAL-RELATED"/>
    <property type="match status" value="1"/>
</dbReference>
<dbReference type="Pfam" id="PF01597">
    <property type="entry name" value="GCV_H"/>
    <property type="match status" value="1"/>
</dbReference>
<dbReference type="SUPFAM" id="SSF51230">
    <property type="entry name" value="Single hybrid motif"/>
    <property type="match status" value="1"/>
</dbReference>
<dbReference type="PROSITE" id="PS50968">
    <property type="entry name" value="BIOTINYL_LIPOYL"/>
    <property type="match status" value="1"/>
</dbReference>
<dbReference type="PROSITE" id="PS00189">
    <property type="entry name" value="LIPOYL"/>
    <property type="match status" value="1"/>
</dbReference>
<reference key="1">
    <citation type="journal article" date="1995" name="Mol. Gen. Genet.">
        <title>H-protein of glycine decarboxylase is encoded by multigene families in Flaveria pringlei and F. cronquistii (Asteraceae).</title>
        <authorList>
            <person name="Kopriva S."/>
            <person name="Bauwe H."/>
        </authorList>
    </citation>
    <scope>NUCLEOTIDE SEQUENCE [MRNA]</scope>
    <source>
        <tissue>Leaf</tissue>
    </source>
</reference>
<sequence>MALRIWASSTANALRLSSATRPHFSPLSRCFSSVLDGLKYANSHEWVKHEGSVATIGITDHAQDHLGEVVFVDLPEAGGSVTKATGFGAVESVKATSDVNSPISGEIVEVNSKLSETPGLINSSPYEDGWMIKVKPSNPSELDSLMGAKEYTKFCEEEDSAH</sequence>
<name>GCSH_FLAPR</name>
<feature type="transit peptide" description="Mitochondrion" evidence="1">
    <location>
        <begin position="1"/>
        <end position="31"/>
    </location>
</feature>
<feature type="chain" id="PRO_0000010733" description="Glycine cleavage system H protein, mitochondrial">
    <location>
        <begin position="32"/>
        <end position="162"/>
    </location>
</feature>
<feature type="domain" description="Lipoyl-binding" evidence="2">
    <location>
        <begin position="53"/>
        <end position="135"/>
    </location>
</feature>
<feature type="modified residue" description="N6-lipoyllysine" evidence="1 2">
    <location>
        <position position="94"/>
    </location>
</feature>
<gene>
    <name type="primary">GDCSH</name>
    <name type="synonym">GCDH</name>
    <name type="synonym">GCSH</name>
</gene>
<comment type="function">
    <text>The glycine cleavage system catalyzes the degradation of glycine. The H protein shuttles the methylamine group of glycine from the P protein to the T protein.</text>
</comment>
<comment type="cofactor">
    <cofactor>
        <name>(R)-lipoate</name>
        <dbReference type="ChEBI" id="CHEBI:83088"/>
    </cofactor>
    <text>Binds 1 lipoyl cofactor covalently.</text>
</comment>
<comment type="subunit">
    <text>The glycine cleavage system is composed of four proteins: P, T, L and H.</text>
</comment>
<comment type="subcellular location">
    <subcellularLocation>
        <location>Mitochondrion</location>
    </subcellularLocation>
</comment>
<comment type="similarity">
    <text evidence="3">Belongs to the GcvH family.</text>
</comment>
<keyword id="KW-0450">Lipoyl</keyword>
<keyword id="KW-0496">Mitochondrion</keyword>
<keyword id="KW-0809">Transit peptide</keyword>
<organism>
    <name type="scientific">Flaveria pringlei</name>
    <dbReference type="NCBI Taxonomy" id="4226"/>
    <lineage>
        <taxon>Eukaryota</taxon>
        <taxon>Viridiplantae</taxon>
        <taxon>Streptophyta</taxon>
        <taxon>Embryophyta</taxon>
        <taxon>Tracheophyta</taxon>
        <taxon>Spermatophyta</taxon>
        <taxon>Magnoliopsida</taxon>
        <taxon>eudicotyledons</taxon>
        <taxon>Gunneridae</taxon>
        <taxon>Pentapetalae</taxon>
        <taxon>asterids</taxon>
        <taxon>campanulids</taxon>
        <taxon>Asterales</taxon>
        <taxon>Asteraceae</taxon>
        <taxon>Asteroideae</taxon>
        <taxon>Heliantheae alliance</taxon>
        <taxon>Tageteae</taxon>
        <taxon>Flaveria</taxon>
    </lineage>
</organism>
<evidence type="ECO:0000250" key="1"/>
<evidence type="ECO:0000255" key="2">
    <source>
        <dbReference type="PROSITE-ProRule" id="PRU01066"/>
    </source>
</evidence>
<evidence type="ECO:0000305" key="3"/>
<protein>
    <recommendedName>
        <fullName>Glycine cleavage system H protein, mitochondrial</fullName>
    </recommendedName>
</protein>